<keyword id="KW-0002">3D-structure</keyword>
<keyword id="KW-0025">Alternative splicing</keyword>
<keyword id="KW-1003">Cell membrane</keyword>
<keyword id="KW-0963">Cytoplasm</keyword>
<keyword id="KW-0472">Membrane</keyword>
<keyword id="KW-0597">Phosphoprotein</keyword>
<keyword id="KW-0653">Protein transport</keyword>
<keyword id="KW-1185">Reference proteome</keyword>
<keyword id="KW-0813">Transport</keyword>
<name>STXB3_MOUSE</name>
<reference key="1">
    <citation type="journal article" date="1995" name="J. Biol. Chem.">
        <title>Molecular identification of two novel Munc-18 isoforms expressed in non-neuronal tissues.</title>
        <authorList>
            <person name="Tellam J.T."/>
            <person name="McIntosh S."/>
            <person name="James D.E."/>
        </authorList>
    </citation>
    <scope>NUCLEOTIDE SEQUENCE [MRNA] (ISOFORM 1)</scope>
    <source>
        <tissue>Adipocyte</tissue>
    </source>
</reference>
<reference key="2">
    <citation type="journal article" date="1996" name="J. Neurosci.">
        <title>A murine neural-specific homolog corrects cholinergic defects in Caenorhabditis elegans unc-18 mutants.</title>
        <authorList>
            <person name="Gengyo-Ando K."/>
            <person name="Kitayama H."/>
            <person name="Mukaida M."/>
            <person name="Ikawa Y."/>
        </authorList>
    </citation>
    <scope>NUCLEOTIDE SEQUENCE [MRNA] (ISOFORM 1)</scope>
    <scope>TISSUE SPECIFICITY</scope>
    <source>
        <strain>BALB/cJ</strain>
        <tissue>Brain</tissue>
    </source>
</reference>
<reference key="3">
    <citation type="journal article" date="2005" name="Science">
        <title>The transcriptional landscape of the mammalian genome.</title>
        <authorList>
            <person name="Carninci P."/>
            <person name="Kasukawa T."/>
            <person name="Katayama S."/>
            <person name="Gough J."/>
            <person name="Frith M.C."/>
            <person name="Maeda N."/>
            <person name="Oyama R."/>
            <person name="Ravasi T."/>
            <person name="Lenhard B."/>
            <person name="Wells C."/>
            <person name="Kodzius R."/>
            <person name="Shimokawa K."/>
            <person name="Bajic V.B."/>
            <person name="Brenner S.E."/>
            <person name="Batalov S."/>
            <person name="Forrest A.R."/>
            <person name="Zavolan M."/>
            <person name="Davis M.J."/>
            <person name="Wilming L.G."/>
            <person name="Aidinis V."/>
            <person name="Allen J.E."/>
            <person name="Ambesi-Impiombato A."/>
            <person name="Apweiler R."/>
            <person name="Aturaliya R.N."/>
            <person name="Bailey T.L."/>
            <person name="Bansal M."/>
            <person name="Baxter L."/>
            <person name="Beisel K.W."/>
            <person name="Bersano T."/>
            <person name="Bono H."/>
            <person name="Chalk A.M."/>
            <person name="Chiu K.P."/>
            <person name="Choudhary V."/>
            <person name="Christoffels A."/>
            <person name="Clutterbuck D.R."/>
            <person name="Crowe M.L."/>
            <person name="Dalla E."/>
            <person name="Dalrymple B.P."/>
            <person name="de Bono B."/>
            <person name="Della Gatta G."/>
            <person name="di Bernardo D."/>
            <person name="Down T."/>
            <person name="Engstrom P."/>
            <person name="Fagiolini M."/>
            <person name="Faulkner G."/>
            <person name="Fletcher C.F."/>
            <person name="Fukushima T."/>
            <person name="Furuno M."/>
            <person name="Futaki S."/>
            <person name="Gariboldi M."/>
            <person name="Georgii-Hemming P."/>
            <person name="Gingeras T.R."/>
            <person name="Gojobori T."/>
            <person name="Green R.E."/>
            <person name="Gustincich S."/>
            <person name="Harbers M."/>
            <person name="Hayashi Y."/>
            <person name="Hensch T.K."/>
            <person name="Hirokawa N."/>
            <person name="Hill D."/>
            <person name="Huminiecki L."/>
            <person name="Iacono M."/>
            <person name="Ikeo K."/>
            <person name="Iwama A."/>
            <person name="Ishikawa T."/>
            <person name="Jakt M."/>
            <person name="Kanapin A."/>
            <person name="Katoh M."/>
            <person name="Kawasawa Y."/>
            <person name="Kelso J."/>
            <person name="Kitamura H."/>
            <person name="Kitano H."/>
            <person name="Kollias G."/>
            <person name="Krishnan S.P."/>
            <person name="Kruger A."/>
            <person name="Kummerfeld S.K."/>
            <person name="Kurochkin I.V."/>
            <person name="Lareau L.F."/>
            <person name="Lazarevic D."/>
            <person name="Lipovich L."/>
            <person name="Liu J."/>
            <person name="Liuni S."/>
            <person name="McWilliam S."/>
            <person name="Madan Babu M."/>
            <person name="Madera M."/>
            <person name="Marchionni L."/>
            <person name="Matsuda H."/>
            <person name="Matsuzawa S."/>
            <person name="Miki H."/>
            <person name="Mignone F."/>
            <person name="Miyake S."/>
            <person name="Morris K."/>
            <person name="Mottagui-Tabar S."/>
            <person name="Mulder N."/>
            <person name="Nakano N."/>
            <person name="Nakauchi H."/>
            <person name="Ng P."/>
            <person name="Nilsson R."/>
            <person name="Nishiguchi S."/>
            <person name="Nishikawa S."/>
            <person name="Nori F."/>
            <person name="Ohara O."/>
            <person name="Okazaki Y."/>
            <person name="Orlando V."/>
            <person name="Pang K.C."/>
            <person name="Pavan W.J."/>
            <person name="Pavesi G."/>
            <person name="Pesole G."/>
            <person name="Petrovsky N."/>
            <person name="Piazza S."/>
            <person name="Reed J."/>
            <person name="Reid J.F."/>
            <person name="Ring B.Z."/>
            <person name="Ringwald M."/>
            <person name="Rost B."/>
            <person name="Ruan Y."/>
            <person name="Salzberg S.L."/>
            <person name="Sandelin A."/>
            <person name="Schneider C."/>
            <person name="Schoenbach C."/>
            <person name="Sekiguchi K."/>
            <person name="Semple C.A."/>
            <person name="Seno S."/>
            <person name="Sessa L."/>
            <person name="Sheng Y."/>
            <person name="Shibata Y."/>
            <person name="Shimada H."/>
            <person name="Shimada K."/>
            <person name="Silva D."/>
            <person name="Sinclair B."/>
            <person name="Sperling S."/>
            <person name="Stupka E."/>
            <person name="Sugiura K."/>
            <person name="Sultana R."/>
            <person name="Takenaka Y."/>
            <person name="Taki K."/>
            <person name="Tammoja K."/>
            <person name="Tan S.L."/>
            <person name="Tang S."/>
            <person name="Taylor M.S."/>
            <person name="Tegner J."/>
            <person name="Teichmann S.A."/>
            <person name="Ueda H.R."/>
            <person name="van Nimwegen E."/>
            <person name="Verardo R."/>
            <person name="Wei C.L."/>
            <person name="Yagi K."/>
            <person name="Yamanishi H."/>
            <person name="Zabarovsky E."/>
            <person name="Zhu S."/>
            <person name="Zimmer A."/>
            <person name="Hide W."/>
            <person name="Bult C."/>
            <person name="Grimmond S.M."/>
            <person name="Teasdale R.D."/>
            <person name="Liu E.T."/>
            <person name="Brusic V."/>
            <person name="Quackenbush J."/>
            <person name="Wahlestedt C."/>
            <person name="Mattick J.S."/>
            <person name="Hume D.A."/>
            <person name="Kai C."/>
            <person name="Sasaki D."/>
            <person name="Tomaru Y."/>
            <person name="Fukuda S."/>
            <person name="Kanamori-Katayama M."/>
            <person name="Suzuki M."/>
            <person name="Aoki J."/>
            <person name="Arakawa T."/>
            <person name="Iida J."/>
            <person name="Imamura K."/>
            <person name="Itoh M."/>
            <person name="Kato T."/>
            <person name="Kawaji H."/>
            <person name="Kawagashira N."/>
            <person name="Kawashima T."/>
            <person name="Kojima M."/>
            <person name="Kondo S."/>
            <person name="Konno H."/>
            <person name="Nakano K."/>
            <person name="Ninomiya N."/>
            <person name="Nishio T."/>
            <person name="Okada M."/>
            <person name="Plessy C."/>
            <person name="Shibata K."/>
            <person name="Shiraki T."/>
            <person name="Suzuki S."/>
            <person name="Tagami M."/>
            <person name="Waki K."/>
            <person name="Watahiki A."/>
            <person name="Okamura-Oho Y."/>
            <person name="Suzuki H."/>
            <person name="Kawai J."/>
            <person name="Hayashizaki Y."/>
        </authorList>
    </citation>
    <scope>NUCLEOTIDE SEQUENCE [LARGE SCALE MRNA] (ISOFORMS 1 AND 2)</scope>
    <source>
        <strain>C57BL/6J</strain>
        <strain>NOD</strain>
        <tissue>Bone marrow macrophage</tissue>
        <tissue>Dendritic cell</tissue>
        <tissue>Spinal cord</tissue>
        <tissue>Thymocyte</tissue>
        <tissue>Thymus</tissue>
    </source>
</reference>
<reference key="4">
    <citation type="journal article" date="2009" name="PLoS Biol.">
        <title>Lineage-specific biology revealed by a finished genome assembly of the mouse.</title>
        <authorList>
            <person name="Church D.M."/>
            <person name="Goodstadt L."/>
            <person name="Hillier L.W."/>
            <person name="Zody M.C."/>
            <person name="Goldstein S."/>
            <person name="She X."/>
            <person name="Bult C.J."/>
            <person name="Agarwala R."/>
            <person name="Cherry J.L."/>
            <person name="DiCuccio M."/>
            <person name="Hlavina W."/>
            <person name="Kapustin Y."/>
            <person name="Meric P."/>
            <person name="Maglott D."/>
            <person name="Birtle Z."/>
            <person name="Marques A.C."/>
            <person name="Graves T."/>
            <person name="Zhou S."/>
            <person name="Teague B."/>
            <person name="Potamousis K."/>
            <person name="Churas C."/>
            <person name="Place M."/>
            <person name="Herschleb J."/>
            <person name="Runnheim R."/>
            <person name="Forrest D."/>
            <person name="Amos-Landgraf J."/>
            <person name="Schwartz D.C."/>
            <person name="Cheng Z."/>
            <person name="Lindblad-Toh K."/>
            <person name="Eichler E.E."/>
            <person name="Ponting C.P."/>
        </authorList>
    </citation>
    <scope>NUCLEOTIDE SEQUENCE [LARGE SCALE GENOMIC DNA]</scope>
    <source>
        <strain>C57BL/6J</strain>
    </source>
</reference>
<reference key="5">
    <citation type="journal article" date="2004" name="Genome Res.">
        <title>The status, quality, and expansion of the NIH full-length cDNA project: the Mammalian Gene Collection (MGC).</title>
        <authorList>
            <consortium name="The MGC Project Team"/>
        </authorList>
    </citation>
    <scope>NUCLEOTIDE SEQUENCE [LARGE SCALE MRNA] (ISOFORM 1)</scope>
    <source>
        <strain>C57BL/6J</strain>
        <tissue>Brain</tissue>
    </source>
</reference>
<reference key="6">
    <citation type="journal article" date="1997" name="J. Biol. Chem.">
        <title>Characterization of Munc-18c and syntaxin-4 in 3T3-L1 adipocytes. Putative role in insulin-dependent movement of GLUT-4.</title>
        <authorList>
            <person name="Tellam J.T."/>
            <person name="Macaulay S.L."/>
            <person name="McIntosh S."/>
            <person name="Hewish D.R."/>
            <person name="Ward C.W."/>
            <person name="James D.E."/>
        </authorList>
    </citation>
    <scope>FUNCTION</scope>
    <scope>INTERACTION WITH STX4</scope>
    <scope>SUBCELLULAR LOCATION</scope>
</reference>
<reference key="7">
    <citation type="journal article" date="2007" name="J. Biol. Chem.">
        <title>Doc2beta is a novel Munc18c-interacting partner and positive effector of syntaxin 4-mediated exocytosis.</title>
        <authorList>
            <person name="Ke B."/>
            <person name="Oh E."/>
            <person name="Thurmond D.C."/>
        </authorList>
    </citation>
    <scope>INTERACTION WITH DOC2B AND STX4</scope>
</reference>
<reference key="8">
    <citation type="journal article" date="2010" name="Cell">
        <title>A tissue-specific atlas of mouse protein phosphorylation and expression.</title>
        <authorList>
            <person name="Huttlin E.L."/>
            <person name="Jedrychowski M.P."/>
            <person name="Elias J.E."/>
            <person name="Goswami T."/>
            <person name="Rad R."/>
            <person name="Beausoleil S.A."/>
            <person name="Villen J."/>
            <person name="Haas W."/>
            <person name="Sowa M.E."/>
            <person name="Gygi S.P."/>
        </authorList>
    </citation>
    <scope>IDENTIFICATION BY MASS SPECTROMETRY [LARGE SCALE ANALYSIS]</scope>
    <source>
        <tissue>Brain</tissue>
        <tissue>Brown adipose tissue</tissue>
        <tissue>Heart</tissue>
        <tissue>Kidney</tissue>
        <tissue>Liver</tissue>
        <tissue>Lung</tissue>
        <tissue>Pancreas</tissue>
        <tissue>Spleen</tissue>
        <tissue>Testis</tissue>
    </source>
</reference>
<protein>
    <recommendedName>
        <fullName>Syntaxin-binding protein 3</fullName>
    </recommendedName>
    <alternativeName>
        <fullName>MUNC-18-3</fullName>
    </alternativeName>
    <alternativeName>
        <fullName>Mammalian homolog of Unc-18c</fullName>
        <shortName>Munc-18c</shortName>
    </alternativeName>
    <alternativeName>
        <fullName>Protein unc-18 homolog 3</fullName>
        <shortName>Unc18-3</shortName>
    </alternativeName>
    <alternativeName>
        <fullName>Protein unc-18 homolog C</fullName>
        <shortName>Unc-18C</shortName>
    </alternativeName>
</protein>
<comment type="function">
    <text evidence="4">Together with STX4 and VAMP2, may play a role in insulin-dependent movement of GLUT4 and in docking/fusion of intracellular GLUT4-containing vesicles with the cell surface in adipocytes.</text>
</comment>
<comment type="subunit">
    <text evidence="2 4">Interacts with STX4. Interacts with DOC2B; the interaction is direct, occurs at the cell membrane, excludes interaction with STX4 and regulates glucose-stimulated insulin secretion.</text>
</comment>
<comment type="interaction">
    <interactant intactId="EBI-8430169">
        <id>Q60770</id>
    </interactant>
    <interactant intactId="EBI-918243">
        <id>Q08850</id>
        <label>Stx4</label>
    </interactant>
    <organismsDiffer>true</organismsDiffer>
    <experiments>4</experiments>
</comment>
<comment type="interaction">
    <interactant intactId="EBI-8430169">
        <id>Q60770</id>
    </interactant>
    <interactant intactId="EBI-520880">
        <id>P63045</id>
        <label>Vamp2</label>
    </interactant>
    <organismsDiffer>true</organismsDiffer>
    <experiments>2</experiments>
</comment>
<comment type="interaction">
    <interactant intactId="EBI-15639434">
        <id>Q60770-1</id>
    </interactant>
    <interactant intactId="EBI-645716">
        <id>P70452</id>
        <label>Stx4</label>
    </interactant>
    <organismsDiffer>false</organismsDiffer>
    <experiments>3</experiments>
</comment>
<comment type="subcellular location">
    <subcellularLocation>
        <location evidence="1">Cytoplasm</location>
        <location evidence="1">Cytosol</location>
    </subcellularLocation>
    <subcellularLocation>
        <location evidence="4">Cell membrane</location>
    </subcellularLocation>
    <text evidence="1">In platelets, predominantly cytosolic. Low amounts membrane-associated (By similarity).</text>
</comment>
<comment type="alternative products">
    <event type="alternative splicing"/>
    <isoform>
        <id>Q60770-1</id>
        <name>1</name>
        <sequence type="displayed"/>
    </isoform>
    <isoform>
        <id>Q60770-2</id>
        <name>2</name>
        <sequence type="described" ref="VSP_037061 VSP_037062"/>
    </isoform>
</comment>
<comment type="tissue specificity">
    <text evidence="3">Ubiquitously expressed in all tissues tested.</text>
</comment>
<comment type="PTM">
    <text evidence="1">Phosphorylated by PKC in platelets in response to thrombin stimulation; phosphorylation inhibits binding to STX4.</text>
</comment>
<comment type="similarity">
    <text evidence="6">Belongs to the STXBP/unc-18/SEC1 family.</text>
</comment>
<comment type="sequence caution" evidence="6">
    <conflict type="frameshift">
        <sequence resource="EMBL-CDS" id="BAE41375"/>
    </conflict>
</comment>
<proteinExistence type="evidence at protein level"/>
<accession>Q60770</accession>
<accession>Q3TE73</accession>
<accession>Q3U2S2</accession>
<accession>Q3U8D9</accession>
<accession>Q3UA91</accession>
<accession>Q3UUB0</accession>
<dbReference type="EMBL" id="U19521">
    <property type="protein sequence ID" value="AAA69913.1"/>
    <property type="molecule type" value="mRNA"/>
</dbReference>
<dbReference type="EMBL" id="D30798">
    <property type="protein sequence ID" value="BAA19478.1"/>
    <property type="molecule type" value="mRNA"/>
</dbReference>
<dbReference type="EMBL" id="AK138609">
    <property type="protein sequence ID" value="BAE23717.1"/>
    <property type="molecule type" value="mRNA"/>
</dbReference>
<dbReference type="EMBL" id="AK151466">
    <property type="protein sequence ID" value="BAE30424.1"/>
    <property type="molecule type" value="mRNA"/>
</dbReference>
<dbReference type="EMBL" id="AK152261">
    <property type="protein sequence ID" value="BAE31079.1"/>
    <property type="molecule type" value="mRNA"/>
</dbReference>
<dbReference type="EMBL" id="AK155133">
    <property type="protein sequence ID" value="BAE33068.1"/>
    <property type="molecule type" value="mRNA"/>
</dbReference>
<dbReference type="EMBL" id="AK169799">
    <property type="protein sequence ID" value="BAE41375.1"/>
    <property type="status" value="ALT_FRAME"/>
    <property type="molecule type" value="mRNA"/>
</dbReference>
<dbReference type="EMBL" id="AL671894">
    <property type="status" value="NOT_ANNOTATED_CDS"/>
    <property type="molecule type" value="Genomic_DNA"/>
</dbReference>
<dbReference type="EMBL" id="AL671917">
    <property type="status" value="NOT_ANNOTATED_CDS"/>
    <property type="molecule type" value="Genomic_DNA"/>
</dbReference>
<dbReference type="EMBL" id="BC062901">
    <property type="protein sequence ID" value="AAH62901.1"/>
    <property type="molecule type" value="mRNA"/>
</dbReference>
<dbReference type="CCDS" id="CCDS17768.1">
    <molecule id="Q60770-1"/>
</dbReference>
<dbReference type="PIR" id="I49239">
    <property type="entry name" value="I49239"/>
</dbReference>
<dbReference type="RefSeq" id="NP_035634.1">
    <molecule id="Q60770-1"/>
    <property type="nucleotide sequence ID" value="NM_011504.1"/>
</dbReference>
<dbReference type="PDB" id="3PUK">
    <property type="method" value="X-ray"/>
    <property type="resolution" value="3.05 A"/>
    <property type="chains" value="A/B=1-592"/>
</dbReference>
<dbReference type="PDBsum" id="3PUK"/>
<dbReference type="SMR" id="Q60770"/>
<dbReference type="BioGRID" id="203566">
    <property type="interactions" value="8"/>
</dbReference>
<dbReference type="DIP" id="DIP-60305N"/>
<dbReference type="FunCoup" id="Q60770">
    <property type="interactions" value="2378"/>
</dbReference>
<dbReference type="IntAct" id="Q60770">
    <property type="interactions" value="8"/>
</dbReference>
<dbReference type="STRING" id="10090.ENSMUSP00000099681"/>
<dbReference type="GlyGen" id="Q60770">
    <property type="glycosylation" value="2 sites, 2 N-linked glycans (2 sites)"/>
</dbReference>
<dbReference type="iPTMnet" id="Q60770"/>
<dbReference type="PhosphoSitePlus" id="Q60770"/>
<dbReference type="SwissPalm" id="Q60770"/>
<dbReference type="jPOST" id="Q60770"/>
<dbReference type="PaxDb" id="10090-ENSMUSP00000099681"/>
<dbReference type="PeptideAtlas" id="Q60770"/>
<dbReference type="ProteomicsDB" id="257097">
    <molecule id="Q60770-1"/>
</dbReference>
<dbReference type="ProteomicsDB" id="257098">
    <molecule id="Q60770-2"/>
</dbReference>
<dbReference type="Pumba" id="Q60770"/>
<dbReference type="Antibodypedia" id="20045">
    <property type="antibodies" value="223 antibodies from 30 providers"/>
</dbReference>
<dbReference type="DNASU" id="20912"/>
<dbReference type="Ensembl" id="ENSMUST00000102621.11">
    <molecule id="Q60770-1"/>
    <property type="protein sequence ID" value="ENSMUSP00000099681.5"/>
    <property type="gene ID" value="ENSMUSG00000027882.19"/>
</dbReference>
<dbReference type="GeneID" id="20912"/>
<dbReference type="KEGG" id="mmu:20912"/>
<dbReference type="UCSC" id="uc008qzr.3">
    <molecule id="Q60770-1"/>
    <property type="organism name" value="mouse"/>
</dbReference>
<dbReference type="AGR" id="MGI:107362"/>
<dbReference type="CTD" id="6814"/>
<dbReference type="MGI" id="MGI:107362">
    <property type="gene designation" value="Stxbp3"/>
</dbReference>
<dbReference type="VEuPathDB" id="HostDB:ENSMUSG00000027882"/>
<dbReference type="eggNOG" id="KOG1300">
    <property type="taxonomic scope" value="Eukaryota"/>
</dbReference>
<dbReference type="GeneTree" id="ENSGT00940000157607"/>
<dbReference type="HOGENOM" id="CLU_009210_2_1_1"/>
<dbReference type="InParanoid" id="Q60770"/>
<dbReference type="OMA" id="LSTCVRM"/>
<dbReference type="OrthoDB" id="2228at2759"/>
<dbReference type="PhylomeDB" id="Q60770"/>
<dbReference type="TreeFam" id="TF313242"/>
<dbReference type="Reactome" id="R-MMU-114516">
    <property type="pathway name" value="Disinhibition of SNARE formation"/>
</dbReference>
<dbReference type="BioGRID-ORCS" id="20912">
    <property type="hits" value="4 hits in 76 CRISPR screens"/>
</dbReference>
<dbReference type="ChiTaRS" id="Stxbp3">
    <property type="organism name" value="mouse"/>
</dbReference>
<dbReference type="EvolutionaryTrace" id="Q60770"/>
<dbReference type="PRO" id="PR:Q60770"/>
<dbReference type="Proteomes" id="UP000000589">
    <property type="component" value="Chromosome 3"/>
</dbReference>
<dbReference type="RNAct" id="Q60770">
    <property type="molecule type" value="protein"/>
</dbReference>
<dbReference type="Bgee" id="ENSMUSG00000027882">
    <property type="expression patterns" value="Expressed in placenta labyrinth and 260 other cell types or tissues"/>
</dbReference>
<dbReference type="ExpressionAtlas" id="Q60770">
    <property type="expression patterns" value="baseline and differential"/>
</dbReference>
<dbReference type="GO" id="GO:0016324">
    <property type="term" value="C:apical plasma membrane"/>
    <property type="evidence" value="ECO:0000314"/>
    <property type="project" value="MGI"/>
</dbReference>
<dbReference type="GO" id="GO:0016323">
    <property type="term" value="C:basolateral plasma membrane"/>
    <property type="evidence" value="ECO:0007669"/>
    <property type="project" value="Ensembl"/>
</dbReference>
<dbReference type="GO" id="GO:0005829">
    <property type="term" value="C:cytosol"/>
    <property type="evidence" value="ECO:0000314"/>
    <property type="project" value="MGI"/>
</dbReference>
<dbReference type="GO" id="GO:0045335">
    <property type="term" value="C:phagocytic vesicle"/>
    <property type="evidence" value="ECO:0000314"/>
    <property type="project" value="MGI"/>
</dbReference>
<dbReference type="GO" id="GO:0005886">
    <property type="term" value="C:plasma membrane"/>
    <property type="evidence" value="ECO:0000314"/>
    <property type="project" value="MGI"/>
</dbReference>
<dbReference type="GO" id="GO:0031091">
    <property type="term" value="C:platelet alpha granule"/>
    <property type="evidence" value="ECO:0007669"/>
    <property type="project" value="Ensembl"/>
</dbReference>
<dbReference type="GO" id="GO:0042581">
    <property type="term" value="C:specific granule"/>
    <property type="evidence" value="ECO:0007669"/>
    <property type="project" value="Ensembl"/>
</dbReference>
<dbReference type="GO" id="GO:0070820">
    <property type="term" value="C:tertiary granule"/>
    <property type="evidence" value="ECO:0007669"/>
    <property type="project" value="Ensembl"/>
</dbReference>
<dbReference type="GO" id="GO:0044877">
    <property type="term" value="F:protein-containing complex binding"/>
    <property type="evidence" value="ECO:0007669"/>
    <property type="project" value="Ensembl"/>
</dbReference>
<dbReference type="GO" id="GO:0019905">
    <property type="term" value="F:syntaxin binding"/>
    <property type="evidence" value="ECO:0000314"/>
    <property type="project" value="MGI"/>
</dbReference>
<dbReference type="GO" id="GO:0017075">
    <property type="term" value="F:syntaxin-1 binding"/>
    <property type="evidence" value="ECO:0007669"/>
    <property type="project" value="Ensembl"/>
</dbReference>
<dbReference type="GO" id="GO:0007420">
    <property type="term" value="P:brain development"/>
    <property type="evidence" value="ECO:0000315"/>
    <property type="project" value="MGI"/>
</dbReference>
<dbReference type="GO" id="GO:0071346">
    <property type="term" value="P:cellular response to type II interferon"/>
    <property type="evidence" value="ECO:0000314"/>
    <property type="project" value="MGI"/>
</dbReference>
<dbReference type="GO" id="GO:0006887">
    <property type="term" value="P:exocytosis"/>
    <property type="evidence" value="ECO:0000315"/>
    <property type="project" value="MGI"/>
</dbReference>
<dbReference type="GO" id="GO:0030073">
    <property type="term" value="P:insulin secretion"/>
    <property type="evidence" value="ECO:0000315"/>
    <property type="project" value="MGI"/>
</dbReference>
<dbReference type="GO" id="GO:0001678">
    <property type="term" value="P:intracellular glucose homeostasis"/>
    <property type="evidence" value="ECO:0000314"/>
    <property type="project" value="MGI"/>
</dbReference>
<dbReference type="GO" id="GO:0045955">
    <property type="term" value="P:negative regulation of calcium ion-dependent exocytosis"/>
    <property type="evidence" value="ECO:0007669"/>
    <property type="project" value="Ensembl"/>
</dbReference>
<dbReference type="GO" id="GO:0046325">
    <property type="term" value="P:negative regulation of D-glucose import"/>
    <property type="evidence" value="ECO:0000314"/>
    <property type="project" value="MGI"/>
</dbReference>
<dbReference type="GO" id="GO:0043312">
    <property type="term" value="P:neutrophil degranulation"/>
    <property type="evidence" value="ECO:0007669"/>
    <property type="project" value="Ensembl"/>
</dbReference>
<dbReference type="GO" id="GO:0070527">
    <property type="term" value="P:platelet aggregation"/>
    <property type="evidence" value="ECO:0007669"/>
    <property type="project" value="Ensembl"/>
</dbReference>
<dbReference type="GO" id="GO:0022615">
    <property type="term" value="P:protein to membrane docking"/>
    <property type="evidence" value="ECO:0000315"/>
    <property type="project" value="MGI"/>
</dbReference>
<dbReference type="GO" id="GO:0032868">
    <property type="term" value="P:response to insulin"/>
    <property type="evidence" value="ECO:0000314"/>
    <property type="project" value="MGI"/>
</dbReference>
<dbReference type="FunFam" id="3.40.50.2060:FF:000006">
    <property type="entry name" value="Syntaxin binding protein 3"/>
    <property type="match status" value="1"/>
</dbReference>
<dbReference type="FunFam" id="3.90.830.10:FF:000001">
    <property type="entry name" value="syntaxin-binding protein 1 isoform X2"/>
    <property type="match status" value="1"/>
</dbReference>
<dbReference type="Gene3D" id="1.25.40.60">
    <property type="match status" value="1"/>
</dbReference>
<dbReference type="Gene3D" id="3.40.50.1910">
    <property type="match status" value="1"/>
</dbReference>
<dbReference type="Gene3D" id="3.40.50.2060">
    <property type="match status" value="1"/>
</dbReference>
<dbReference type="Gene3D" id="3.90.830.10">
    <property type="entry name" value="Syntaxin Binding Protein 1, Chain A, domain 2"/>
    <property type="match status" value="1"/>
</dbReference>
<dbReference type="InterPro" id="IPR043154">
    <property type="entry name" value="Sec-1-like_dom1"/>
</dbReference>
<dbReference type="InterPro" id="IPR043127">
    <property type="entry name" value="Sec-1-like_dom3a"/>
</dbReference>
<dbReference type="InterPro" id="IPR001619">
    <property type="entry name" value="Sec1-like"/>
</dbReference>
<dbReference type="InterPro" id="IPR027482">
    <property type="entry name" value="Sec1-like_dom2"/>
</dbReference>
<dbReference type="InterPro" id="IPR036045">
    <property type="entry name" value="Sec1-like_sf"/>
</dbReference>
<dbReference type="PANTHER" id="PTHR11679">
    <property type="entry name" value="VESICLE PROTEIN SORTING-ASSOCIATED"/>
    <property type="match status" value="1"/>
</dbReference>
<dbReference type="Pfam" id="PF00995">
    <property type="entry name" value="Sec1"/>
    <property type="match status" value="1"/>
</dbReference>
<dbReference type="PIRSF" id="PIRSF005715">
    <property type="entry name" value="VPS45_Sec1"/>
    <property type="match status" value="1"/>
</dbReference>
<dbReference type="SUPFAM" id="SSF56815">
    <property type="entry name" value="Sec1/munc18-like (SM) proteins"/>
    <property type="match status" value="1"/>
</dbReference>
<evidence type="ECO:0000250" key="1"/>
<evidence type="ECO:0000269" key="2">
    <source>
    </source>
</evidence>
<evidence type="ECO:0000269" key="3">
    <source>
    </source>
</evidence>
<evidence type="ECO:0000269" key="4">
    <source>
    </source>
</evidence>
<evidence type="ECO:0000303" key="5">
    <source>
    </source>
</evidence>
<evidence type="ECO:0000305" key="6"/>
<evidence type="ECO:0007829" key="7">
    <source>
        <dbReference type="PDB" id="3PUK"/>
    </source>
</evidence>
<sequence length="592" mass="67942">MAPPVSERGLKSVVWRKIKTAVFDDCRKEGEWKIMLLDEFTTKLLSSCCKMTDLLEEGITVIENIYKNREPVRQMKALYFISPTPKSVDCFLRDFGSKSEKKYKAAYIYFTDFCPDSLFNKIKASCSKSIRRCKEINISFIPQESQVYTLDVPDAFYYCYSPDPSNASRKEVVMEAMAEQIVTVCATLDENPGVRYKSKPLDNASKLAQLVEKKLEDYYKIDEKGLIKGKTQSQLLIIDRGFDPVSTVLHELTFQAMAYDLLPIENDTYKYKTDGKEKEAVLEEDDDLWVRVRHRHIAVVLEEIPKLMKEISSTKKATEGKTSLSALTQLMKKMPHFRKQISKQVVHLNLAEDCMNKFKLNIEKLCKTEQDLALGTDAEGQRVKDSMLVLLPVLLNKNHDNCDKIRAVLLYIFGINGTTEENLDRLIHNVKIEDDSDMIRNWSHLGVPIVPPSQQAKPLRKDRSAEETFQLSRWTPFIKDIMEDAIDNRLDSKEWPYCSRCPAVWNGSGAVSARQKPRTNYLELDRKNGSRLIIFVIGGITYSEMRCAYEVSQAHKSCEVIIGSTHILTPRKLLDDIKMLNKSKDKVSFKDE</sequence>
<organism>
    <name type="scientific">Mus musculus</name>
    <name type="common">Mouse</name>
    <dbReference type="NCBI Taxonomy" id="10090"/>
    <lineage>
        <taxon>Eukaryota</taxon>
        <taxon>Metazoa</taxon>
        <taxon>Chordata</taxon>
        <taxon>Craniata</taxon>
        <taxon>Vertebrata</taxon>
        <taxon>Euteleostomi</taxon>
        <taxon>Mammalia</taxon>
        <taxon>Eutheria</taxon>
        <taxon>Euarchontoglires</taxon>
        <taxon>Glires</taxon>
        <taxon>Rodentia</taxon>
        <taxon>Myomorpha</taxon>
        <taxon>Muroidea</taxon>
        <taxon>Muridae</taxon>
        <taxon>Murinae</taxon>
        <taxon>Mus</taxon>
        <taxon>Mus</taxon>
    </lineage>
</organism>
<gene>
    <name type="primary">Stxbp3</name>
    <name type="synonym">Stxbp3a</name>
    <name type="synonym">Unc18c</name>
</gene>
<feature type="chain" id="PRO_0000206286" description="Syntaxin-binding protein 3">
    <location>
        <begin position="1"/>
        <end position="592"/>
    </location>
</feature>
<feature type="region of interest" description="Mediates interaction with DOC2B" evidence="2">
    <location>
        <begin position="1"/>
        <end position="255"/>
    </location>
</feature>
<feature type="splice variant" id="VSP_037061" description="In isoform 2." evidence="5">
    <location>
        <begin position="344"/>
        <end position="370"/>
    </location>
</feature>
<feature type="splice variant" id="VSP_037062" description="In isoform 2." evidence="5">
    <location>
        <begin position="484"/>
        <end position="511"/>
    </location>
</feature>
<feature type="sequence conflict" description="In Ref. 3; BAE31079." evidence="6" ref="3">
    <original>K</original>
    <variation>R</variation>
    <location>
        <position position="123"/>
    </location>
</feature>
<feature type="sequence conflict" description="In Ref. 3; BAE23717." evidence="6" ref="3">
    <original>N</original>
    <variation>Y</variation>
    <location>
        <position position="166"/>
    </location>
</feature>
<feature type="sequence conflict" description="In Ref. 3; BAE33068." evidence="6" ref="3">
    <original>E</original>
    <variation>Q</variation>
    <location>
        <position position="303"/>
    </location>
</feature>
<feature type="sequence conflict" description="In Ref. 3; BAE33068." evidence="6" ref="3">
    <original>N</original>
    <variation>S</variation>
    <location>
        <position position="361"/>
    </location>
</feature>
<feature type="sequence conflict" description="In Ref. 3; BAE23717." evidence="6" ref="3">
    <original>E</original>
    <variation>G</variation>
    <location>
        <position position="467"/>
    </location>
</feature>
<feature type="sequence conflict" description="In Ref. 3; BAE31079." evidence="6" ref="3">
    <original>R</original>
    <variation>K</variation>
    <location>
        <position position="489"/>
    </location>
</feature>
<feature type="helix" evidence="7">
    <location>
        <begin position="10"/>
        <end position="21"/>
    </location>
</feature>
<feature type="helix" evidence="7">
    <location>
        <begin position="24"/>
        <end position="26"/>
    </location>
</feature>
<feature type="strand" evidence="7">
    <location>
        <begin position="33"/>
        <end position="37"/>
    </location>
</feature>
<feature type="helix" evidence="7">
    <location>
        <begin position="39"/>
        <end position="47"/>
    </location>
</feature>
<feature type="helix" evidence="7">
    <location>
        <begin position="53"/>
        <end position="57"/>
    </location>
</feature>
<feature type="strand" evidence="7">
    <location>
        <begin position="59"/>
        <end position="67"/>
    </location>
</feature>
<feature type="strand" evidence="7">
    <location>
        <begin position="77"/>
        <end position="81"/>
    </location>
</feature>
<feature type="helix" evidence="7">
    <location>
        <begin position="85"/>
        <end position="95"/>
    </location>
</feature>
<feature type="helix" evidence="7">
    <location>
        <begin position="97"/>
        <end position="99"/>
    </location>
</feature>
<feature type="strand" evidence="7">
    <location>
        <begin position="106"/>
        <end position="112"/>
    </location>
</feature>
<feature type="helix" evidence="7">
    <location>
        <begin position="116"/>
        <end position="124"/>
    </location>
</feature>
<feature type="strand" evidence="7">
    <location>
        <begin position="128"/>
        <end position="135"/>
    </location>
</feature>
<feature type="strand" evidence="7">
    <location>
        <begin position="140"/>
        <end position="144"/>
    </location>
</feature>
<feature type="strand" evidence="7">
    <location>
        <begin position="147"/>
        <end position="150"/>
    </location>
</feature>
<feature type="helix" evidence="7">
    <location>
        <begin position="155"/>
        <end position="159"/>
    </location>
</feature>
<feature type="strand" evidence="7">
    <location>
        <begin position="163"/>
        <end position="165"/>
    </location>
</feature>
<feature type="helix" evidence="7">
    <location>
        <begin position="168"/>
        <end position="188"/>
    </location>
</feature>
<feature type="strand" evidence="7">
    <location>
        <begin position="193"/>
        <end position="196"/>
    </location>
</feature>
<feature type="strand" evidence="7">
    <location>
        <begin position="199"/>
        <end position="202"/>
    </location>
</feature>
<feature type="helix" evidence="7">
    <location>
        <begin position="203"/>
        <end position="217"/>
    </location>
</feature>
<feature type="strand" evidence="7">
    <location>
        <begin position="218"/>
        <end position="221"/>
    </location>
</feature>
<feature type="strand" evidence="7">
    <location>
        <begin position="232"/>
        <end position="239"/>
    </location>
</feature>
<feature type="helix" evidence="7">
    <location>
        <begin position="240"/>
        <end position="242"/>
    </location>
</feature>
<feature type="turn" evidence="7">
    <location>
        <begin position="246"/>
        <end position="248"/>
    </location>
</feature>
<feature type="helix" evidence="7">
    <location>
        <begin position="254"/>
        <end position="261"/>
    </location>
</feature>
<feature type="helix" evidence="7">
    <location>
        <begin position="265"/>
        <end position="267"/>
    </location>
</feature>
<feature type="strand" evidence="7">
    <location>
        <begin position="268"/>
        <end position="270"/>
    </location>
</feature>
<feature type="strand" evidence="7">
    <location>
        <begin position="273"/>
        <end position="276"/>
    </location>
</feature>
<feature type="strand" evidence="7">
    <location>
        <begin position="279"/>
        <end position="281"/>
    </location>
</feature>
<feature type="strand" evidence="7">
    <location>
        <begin position="286"/>
        <end position="288"/>
    </location>
</feature>
<feature type="turn" evidence="7">
    <location>
        <begin position="289"/>
        <end position="294"/>
    </location>
</feature>
<feature type="helix" evidence="7">
    <location>
        <begin position="297"/>
        <end position="301"/>
    </location>
</feature>
<feature type="turn" evidence="7">
    <location>
        <begin position="309"/>
        <end position="313"/>
    </location>
</feature>
<feature type="helix" evidence="7">
    <location>
        <begin position="327"/>
        <end position="336"/>
    </location>
</feature>
<feature type="turn" evidence="7">
    <location>
        <begin position="337"/>
        <end position="339"/>
    </location>
</feature>
<feature type="helix" evidence="7">
    <location>
        <begin position="340"/>
        <end position="360"/>
    </location>
</feature>
<feature type="helix" evidence="7">
    <location>
        <begin position="362"/>
        <end position="373"/>
    </location>
</feature>
<feature type="strand" evidence="7">
    <location>
        <begin position="374"/>
        <end position="376"/>
    </location>
</feature>
<feature type="helix" evidence="7">
    <location>
        <begin position="387"/>
        <end position="390"/>
    </location>
</feature>
<feature type="turn" evidence="7">
    <location>
        <begin position="391"/>
        <end position="394"/>
    </location>
</feature>
<feature type="helix" evidence="7">
    <location>
        <begin position="401"/>
        <end position="414"/>
    </location>
</feature>
<feature type="helix" evidence="7">
    <location>
        <begin position="420"/>
        <end position="429"/>
    </location>
</feature>
<feature type="turn" evidence="7">
    <location>
        <begin position="434"/>
        <end position="436"/>
    </location>
</feature>
<feature type="helix" evidence="7">
    <location>
        <begin position="437"/>
        <end position="440"/>
    </location>
</feature>
<feature type="helix" evidence="7">
    <location>
        <begin position="441"/>
        <end position="445"/>
    </location>
</feature>
<feature type="strand" evidence="7">
    <location>
        <begin position="449"/>
        <end position="455"/>
    </location>
</feature>
<feature type="helix" evidence="7">
    <location>
        <begin position="468"/>
        <end position="470"/>
    </location>
</feature>
<feature type="helix" evidence="7">
    <location>
        <begin position="479"/>
        <end position="486"/>
    </location>
</feature>
<feature type="turn" evidence="7">
    <location>
        <begin position="492"/>
        <end position="494"/>
    </location>
</feature>
<feature type="strand" evidence="7">
    <location>
        <begin position="530"/>
        <end position="537"/>
    </location>
</feature>
<feature type="helix" evidence="7">
    <location>
        <begin position="542"/>
        <end position="554"/>
    </location>
</feature>
<feature type="strand" evidence="7">
    <location>
        <begin position="557"/>
        <end position="568"/>
    </location>
</feature>
<feature type="helix" evidence="7">
    <location>
        <begin position="570"/>
        <end position="577"/>
    </location>
</feature>